<organism>
    <name type="scientific">Methylococcus capsulatus (strain ATCC 33009 / NCIMB 11132 / Bath)</name>
    <dbReference type="NCBI Taxonomy" id="243233"/>
    <lineage>
        <taxon>Bacteria</taxon>
        <taxon>Pseudomonadati</taxon>
        <taxon>Pseudomonadota</taxon>
        <taxon>Gammaproteobacteria</taxon>
        <taxon>Methylococcales</taxon>
        <taxon>Methylococcaceae</taxon>
        <taxon>Methylococcus</taxon>
    </lineage>
</organism>
<keyword id="KW-0004">4Fe-4S</keyword>
<keyword id="KW-0963">Cytoplasm</keyword>
<keyword id="KW-0408">Iron</keyword>
<keyword id="KW-0411">Iron-sulfur</keyword>
<keyword id="KW-0479">Metal-binding</keyword>
<keyword id="KW-1185">Reference proteome</keyword>
<keyword id="KW-0949">S-adenosyl-L-methionine</keyword>
<keyword id="KW-0808">Transferase</keyword>
<sequence length="322" mass="35702">MKTLDENQAPSRQTPESHRRGAEKLSRIPVKVEPGAPLRKPDWIRVRAGSGDEVRRVKRLLRERGLHSVCEEAACPNLAECFGHGTATFMILGDICTRRCPFCDVAHGRPAPPDPAEPERLAETIALLRLRYVVITSVDRDDLRDGGAAHFAACIRALRTRSPALSVEILTPDFRGRMEIALDLLAADPPDVFNHNIETVPRLYRQARPGADYRQSLELLARFRDKVPGVPTKSGLMLGLGETLDEVREALRDLRGHGCEMLTLGQYLQPSRDHLPVVRYVPPAEFDELAGYARELGFASVASAPLVRSSYHADQQAAIIGR</sequence>
<protein>
    <recommendedName>
        <fullName evidence="1">Lipoyl synthase</fullName>
        <ecNumber evidence="1">2.8.1.8</ecNumber>
    </recommendedName>
    <alternativeName>
        <fullName evidence="1">Lip-syn</fullName>
        <shortName evidence="1">LS</shortName>
    </alternativeName>
    <alternativeName>
        <fullName evidence="1">Lipoate synthase</fullName>
    </alternativeName>
    <alternativeName>
        <fullName evidence="1">Lipoic acid synthase</fullName>
    </alternativeName>
    <alternativeName>
        <fullName evidence="1">Sulfur insertion protein LipA</fullName>
    </alternativeName>
</protein>
<feature type="chain" id="PRO_1000012233" description="Lipoyl synthase">
    <location>
        <begin position="1"/>
        <end position="322"/>
    </location>
</feature>
<feature type="domain" description="Radical SAM core" evidence="2">
    <location>
        <begin position="82"/>
        <end position="299"/>
    </location>
</feature>
<feature type="region of interest" description="Disordered" evidence="3">
    <location>
        <begin position="1"/>
        <end position="30"/>
    </location>
</feature>
<feature type="compositionally biased region" description="Polar residues" evidence="3">
    <location>
        <begin position="1"/>
        <end position="14"/>
    </location>
</feature>
<feature type="compositionally biased region" description="Basic and acidic residues" evidence="3">
    <location>
        <begin position="15"/>
        <end position="26"/>
    </location>
</feature>
<feature type="binding site" evidence="1">
    <location>
        <position position="70"/>
    </location>
    <ligand>
        <name>[4Fe-4S] cluster</name>
        <dbReference type="ChEBI" id="CHEBI:49883"/>
        <label>1</label>
    </ligand>
</feature>
<feature type="binding site" evidence="1">
    <location>
        <position position="75"/>
    </location>
    <ligand>
        <name>[4Fe-4S] cluster</name>
        <dbReference type="ChEBI" id="CHEBI:49883"/>
        <label>1</label>
    </ligand>
</feature>
<feature type="binding site" evidence="1">
    <location>
        <position position="81"/>
    </location>
    <ligand>
        <name>[4Fe-4S] cluster</name>
        <dbReference type="ChEBI" id="CHEBI:49883"/>
        <label>1</label>
    </ligand>
</feature>
<feature type="binding site" evidence="1">
    <location>
        <position position="96"/>
    </location>
    <ligand>
        <name>[4Fe-4S] cluster</name>
        <dbReference type="ChEBI" id="CHEBI:49883"/>
        <label>2</label>
        <note>4Fe-4S-S-AdoMet</note>
    </ligand>
</feature>
<feature type="binding site" evidence="1">
    <location>
        <position position="100"/>
    </location>
    <ligand>
        <name>[4Fe-4S] cluster</name>
        <dbReference type="ChEBI" id="CHEBI:49883"/>
        <label>2</label>
        <note>4Fe-4S-S-AdoMet</note>
    </ligand>
</feature>
<feature type="binding site" evidence="1">
    <location>
        <position position="103"/>
    </location>
    <ligand>
        <name>[4Fe-4S] cluster</name>
        <dbReference type="ChEBI" id="CHEBI:49883"/>
        <label>2</label>
        <note>4Fe-4S-S-AdoMet</note>
    </ligand>
</feature>
<feature type="binding site" evidence="1">
    <location>
        <position position="310"/>
    </location>
    <ligand>
        <name>[4Fe-4S] cluster</name>
        <dbReference type="ChEBI" id="CHEBI:49883"/>
        <label>1</label>
    </ligand>
</feature>
<dbReference type="EC" id="2.8.1.8" evidence="1"/>
<dbReference type="EMBL" id="AE017282">
    <property type="protein sequence ID" value="AAU90700.1"/>
    <property type="molecule type" value="Genomic_DNA"/>
</dbReference>
<dbReference type="RefSeq" id="WP_010959480.1">
    <property type="nucleotide sequence ID" value="NC_002977.6"/>
</dbReference>
<dbReference type="SMR" id="Q60CJ6"/>
<dbReference type="STRING" id="243233.MCA0110"/>
<dbReference type="GeneID" id="88222460"/>
<dbReference type="KEGG" id="mca:MCA0110"/>
<dbReference type="eggNOG" id="COG0320">
    <property type="taxonomic scope" value="Bacteria"/>
</dbReference>
<dbReference type="HOGENOM" id="CLU_033144_2_1_6"/>
<dbReference type="UniPathway" id="UPA00538">
    <property type="reaction ID" value="UER00593"/>
</dbReference>
<dbReference type="Proteomes" id="UP000006821">
    <property type="component" value="Chromosome"/>
</dbReference>
<dbReference type="GO" id="GO:0005737">
    <property type="term" value="C:cytoplasm"/>
    <property type="evidence" value="ECO:0007669"/>
    <property type="project" value="UniProtKB-SubCell"/>
</dbReference>
<dbReference type="GO" id="GO:0051539">
    <property type="term" value="F:4 iron, 4 sulfur cluster binding"/>
    <property type="evidence" value="ECO:0007669"/>
    <property type="project" value="UniProtKB-UniRule"/>
</dbReference>
<dbReference type="GO" id="GO:0016992">
    <property type="term" value="F:lipoate synthase activity"/>
    <property type="evidence" value="ECO:0007669"/>
    <property type="project" value="UniProtKB-UniRule"/>
</dbReference>
<dbReference type="GO" id="GO:0046872">
    <property type="term" value="F:metal ion binding"/>
    <property type="evidence" value="ECO:0007669"/>
    <property type="project" value="UniProtKB-KW"/>
</dbReference>
<dbReference type="CDD" id="cd01335">
    <property type="entry name" value="Radical_SAM"/>
    <property type="match status" value="1"/>
</dbReference>
<dbReference type="FunFam" id="3.20.20.70:FF:000040">
    <property type="entry name" value="Lipoyl synthase"/>
    <property type="match status" value="1"/>
</dbReference>
<dbReference type="Gene3D" id="3.20.20.70">
    <property type="entry name" value="Aldolase class I"/>
    <property type="match status" value="1"/>
</dbReference>
<dbReference type="HAMAP" id="MF_00206">
    <property type="entry name" value="Lipoyl_synth"/>
    <property type="match status" value="1"/>
</dbReference>
<dbReference type="InterPro" id="IPR013785">
    <property type="entry name" value="Aldolase_TIM"/>
</dbReference>
<dbReference type="InterPro" id="IPR006638">
    <property type="entry name" value="Elp3/MiaA/NifB-like_rSAM"/>
</dbReference>
<dbReference type="InterPro" id="IPR003698">
    <property type="entry name" value="Lipoyl_synth"/>
</dbReference>
<dbReference type="InterPro" id="IPR007197">
    <property type="entry name" value="rSAM"/>
</dbReference>
<dbReference type="NCBIfam" id="TIGR00510">
    <property type="entry name" value="lipA"/>
    <property type="match status" value="1"/>
</dbReference>
<dbReference type="NCBIfam" id="NF004019">
    <property type="entry name" value="PRK05481.1"/>
    <property type="match status" value="1"/>
</dbReference>
<dbReference type="NCBIfam" id="NF009544">
    <property type="entry name" value="PRK12928.1"/>
    <property type="match status" value="1"/>
</dbReference>
<dbReference type="PANTHER" id="PTHR10949">
    <property type="entry name" value="LIPOYL SYNTHASE"/>
    <property type="match status" value="1"/>
</dbReference>
<dbReference type="PANTHER" id="PTHR10949:SF0">
    <property type="entry name" value="LIPOYL SYNTHASE, MITOCHONDRIAL"/>
    <property type="match status" value="1"/>
</dbReference>
<dbReference type="Pfam" id="PF04055">
    <property type="entry name" value="Radical_SAM"/>
    <property type="match status" value="1"/>
</dbReference>
<dbReference type="PIRSF" id="PIRSF005963">
    <property type="entry name" value="Lipoyl_synth"/>
    <property type="match status" value="1"/>
</dbReference>
<dbReference type="SFLD" id="SFLDF00271">
    <property type="entry name" value="lipoyl_synthase"/>
    <property type="match status" value="1"/>
</dbReference>
<dbReference type="SFLD" id="SFLDS00029">
    <property type="entry name" value="Radical_SAM"/>
    <property type="match status" value="1"/>
</dbReference>
<dbReference type="SMART" id="SM00729">
    <property type="entry name" value="Elp3"/>
    <property type="match status" value="1"/>
</dbReference>
<dbReference type="SUPFAM" id="SSF102114">
    <property type="entry name" value="Radical SAM enzymes"/>
    <property type="match status" value="1"/>
</dbReference>
<dbReference type="PROSITE" id="PS51918">
    <property type="entry name" value="RADICAL_SAM"/>
    <property type="match status" value="1"/>
</dbReference>
<name>LIPA_METCA</name>
<gene>
    <name evidence="1" type="primary">lipA</name>
    <name type="ordered locus">MCA0110</name>
</gene>
<proteinExistence type="inferred from homology"/>
<reference key="1">
    <citation type="journal article" date="2004" name="PLoS Biol.">
        <title>Genomic insights into methanotrophy: the complete genome sequence of Methylococcus capsulatus (Bath).</title>
        <authorList>
            <person name="Ward N.L."/>
            <person name="Larsen O."/>
            <person name="Sakwa J."/>
            <person name="Bruseth L."/>
            <person name="Khouri H.M."/>
            <person name="Durkin A.S."/>
            <person name="Dimitrov G."/>
            <person name="Jiang L."/>
            <person name="Scanlan D."/>
            <person name="Kang K.H."/>
            <person name="Lewis M.R."/>
            <person name="Nelson K.E."/>
            <person name="Methe B.A."/>
            <person name="Wu M."/>
            <person name="Heidelberg J.F."/>
            <person name="Paulsen I.T."/>
            <person name="Fouts D.E."/>
            <person name="Ravel J."/>
            <person name="Tettelin H."/>
            <person name="Ren Q."/>
            <person name="Read T.D."/>
            <person name="DeBoy R.T."/>
            <person name="Seshadri R."/>
            <person name="Salzberg S.L."/>
            <person name="Jensen H.B."/>
            <person name="Birkeland N.K."/>
            <person name="Nelson W.C."/>
            <person name="Dodson R.J."/>
            <person name="Grindhaug S.H."/>
            <person name="Holt I.E."/>
            <person name="Eidhammer I."/>
            <person name="Jonasen I."/>
            <person name="Vanaken S."/>
            <person name="Utterback T.R."/>
            <person name="Feldblyum T.V."/>
            <person name="Fraser C.M."/>
            <person name="Lillehaug J.R."/>
            <person name="Eisen J.A."/>
        </authorList>
    </citation>
    <scope>NUCLEOTIDE SEQUENCE [LARGE SCALE GENOMIC DNA]</scope>
    <source>
        <strain>ATCC 33009 / NCIMB 11132 / Bath</strain>
    </source>
</reference>
<evidence type="ECO:0000255" key="1">
    <source>
        <dbReference type="HAMAP-Rule" id="MF_00206"/>
    </source>
</evidence>
<evidence type="ECO:0000255" key="2">
    <source>
        <dbReference type="PROSITE-ProRule" id="PRU01266"/>
    </source>
</evidence>
<evidence type="ECO:0000256" key="3">
    <source>
        <dbReference type="SAM" id="MobiDB-lite"/>
    </source>
</evidence>
<accession>Q60CJ6</accession>
<comment type="function">
    <text evidence="1">Catalyzes the radical-mediated insertion of two sulfur atoms into the C-6 and C-8 positions of the octanoyl moiety bound to the lipoyl domains of lipoate-dependent enzymes, thereby converting the octanoylated domains into lipoylated derivatives.</text>
</comment>
<comment type="catalytic activity">
    <reaction evidence="1">
        <text>[[Fe-S] cluster scaffold protein carrying a second [4Fe-4S](2+) cluster] + N(6)-octanoyl-L-lysyl-[protein] + 2 oxidized [2Fe-2S]-[ferredoxin] + 2 S-adenosyl-L-methionine + 4 H(+) = [[Fe-S] cluster scaffold protein] + N(6)-[(R)-dihydrolipoyl]-L-lysyl-[protein] + 4 Fe(3+) + 2 hydrogen sulfide + 2 5'-deoxyadenosine + 2 L-methionine + 2 reduced [2Fe-2S]-[ferredoxin]</text>
        <dbReference type="Rhea" id="RHEA:16585"/>
        <dbReference type="Rhea" id="RHEA-COMP:9928"/>
        <dbReference type="Rhea" id="RHEA-COMP:10000"/>
        <dbReference type="Rhea" id="RHEA-COMP:10001"/>
        <dbReference type="Rhea" id="RHEA-COMP:10475"/>
        <dbReference type="Rhea" id="RHEA-COMP:14568"/>
        <dbReference type="Rhea" id="RHEA-COMP:14569"/>
        <dbReference type="ChEBI" id="CHEBI:15378"/>
        <dbReference type="ChEBI" id="CHEBI:17319"/>
        <dbReference type="ChEBI" id="CHEBI:29034"/>
        <dbReference type="ChEBI" id="CHEBI:29919"/>
        <dbReference type="ChEBI" id="CHEBI:33722"/>
        <dbReference type="ChEBI" id="CHEBI:33737"/>
        <dbReference type="ChEBI" id="CHEBI:33738"/>
        <dbReference type="ChEBI" id="CHEBI:57844"/>
        <dbReference type="ChEBI" id="CHEBI:59789"/>
        <dbReference type="ChEBI" id="CHEBI:78809"/>
        <dbReference type="ChEBI" id="CHEBI:83100"/>
        <dbReference type="EC" id="2.8.1.8"/>
    </reaction>
</comment>
<comment type="cofactor">
    <cofactor evidence="1">
        <name>[4Fe-4S] cluster</name>
        <dbReference type="ChEBI" id="CHEBI:49883"/>
    </cofactor>
    <text evidence="1">Binds 2 [4Fe-4S] clusters per subunit. One cluster is coordinated with 3 cysteines and an exchangeable S-adenosyl-L-methionine.</text>
</comment>
<comment type="pathway">
    <text evidence="1">Protein modification; protein lipoylation via endogenous pathway; protein N(6)-(lipoyl)lysine from octanoyl-[acyl-carrier-protein]: step 2/2.</text>
</comment>
<comment type="subcellular location">
    <subcellularLocation>
        <location evidence="1">Cytoplasm</location>
    </subcellularLocation>
</comment>
<comment type="similarity">
    <text evidence="1">Belongs to the radical SAM superfamily. Lipoyl synthase family.</text>
</comment>